<sequence length="211" mass="22557">MTIGVVGRKAGMTRIFTEEGVSIPVTVIEIEPNRVTQFKTEETDGYRAVQVTVGERRASRVTAAQAGHFAKANVAAGRGVWEFRLEEGDFQAGDLIKAELFTAGQLVDVTGQSKGKGFAGTIKRWNFRGQDNTHGNSVSHRVPGSIGQCQTPGRVFKGKKMSGHMGAERVTVQSLEVVRVDAERNLLLIKGAVPGATGGDVVVRPAVKARG</sequence>
<accession>Q1IFW6</accession>
<dbReference type="EMBL" id="CT573326">
    <property type="protein sequence ID" value="CAK13436.1"/>
    <property type="molecule type" value="Genomic_DNA"/>
</dbReference>
<dbReference type="RefSeq" id="WP_011531887.1">
    <property type="nucleotide sequence ID" value="NC_008027.1"/>
</dbReference>
<dbReference type="SMR" id="Q1IFW6"/>
<dbReference type="STRING" id="384676.PSEEN0490"/>
<dbReference type="GeneID" id="93675522"/>
<dbReference type="KEGG" id="pen:PSEEN0490"/>
<dbReference type="eggNOG" id="COG0087">
    <property type="taxonomic scope" value="Bacteria"/>
</dbReference>
<dbReference type="HOGENOM" id="CLU_044142_4_1_6"/>
<dbReference type="OrthoDB" id="9806135at2"/>
<dbReference type="Proteomes" id="UP000000658">
    <property type="component" value="Chromosome"/>
</dbReference>
<dbReference type="GO" id="GO:0022625">
    <property type="term" value="C:cytosolic large ribosomal subunit"/>
    <property type="evidence" value="ECO:0007669"/>
    <property type="project" value="TreeGrafter"/>
</dbReference>
<dbReference type="GO" id="GO:0019843">
    <property type="term" value="F:rRNA binding"/>
    <property type="evidence" value="ECO:0007669"/>
    <property type="project" value="UniProtKB-UniRule"/>
</dbReference>
<dbReference type="GO" id="GO:0003735">
    <property type="term" value="F:structural constituent of ribosome"/>
    <property type="evidence" value="ECO:0007669"/>
    <property type="project" value="InterPro"/>
</dbReference>
<dbReference type="GO" id="GO:0006412">
    <property type="term" value="P:translation"/>
    <property type="evidence" value="ECO:0007669"/>
    <property type="project" value="UniProtKB-UniRule"/>
</dbReference>
<dbReference type="FunFam" id="2.40.30.10:FF:000004">
    <property type="entry name" value="50S ribosomal protein L3"/>
    <property type="match status" value="1"/>
</dbReference>
<dbReference type="FunFam" id="3.30.160.810:FF:000001">
    <property type="entry name" value="50S ribosomal protein L3"/>
    <property type="match status" value="1"/>
</dbReference>
<dbReference type="Gene3D" id="3.30.160.810">
    <property type="match status" value="1"/>
</dbReference>
<dbReference type="Gene3D" id="2.40.30.10">
    <property type="entry name" value="Translation factors"/>
    <property type="match status" value="1"/>
</dbReference>
<dbReference type="HAMAP" id="MF_01325_B">
    <property type="entry name" value="Ribosomal_uL3_B"/>
    <property type="match status" value="1"/>
</dbReference>
<dbReference type="InterPro" id="IPR000597">
    <property type="entry name" value="Ribosomal_uL3"/>
</dbReference>
<dbReference type="InterPro" id="IPR019927">
    <property type="entry name" value="Ribosomal_uL3_bac/org-type"/>
</dbReference>
<dbReference type="InterPro" id="IPR019926">
    <property type="entry name" value="Ribosomal_uL3_CS"/>
</dbReference>
<dbReference type="InterPro" id="IPR009000">
    <property type="entry name" value="Transl_B-barrel_sf"/>
</dbReference>
<dbReference type="NCBIfam" id="TIGR03625">
    <property type="entry name" value="L3_bact"/>
    <property type="match status" value="1"/>
</dbReference>
<dbReference type="PANTHER" id="PTHR11229">
    <property type="entry name" value="50S RIBOSOMAL PROTEIN L3"/>
    <property type="match status" value="1"/>
</dbReference>
<dbReference type="PANTHER" id="PTHR11229:SF16">
    <property type="entry name" value="LARGE RIBOSOMAL SUBUNIT PROTEIN UL3C"/>
    <property type="match status" value="1"/>
</dbReference>
<dbReference type="Pfam" id="PF00297">
    <property type="entry name" value="Ribosomal_L3"/>
    <property type="match status" value="1"/>
</dbReference>
<dbReference type="SUPFAM" id="SSF50447">
    <property type="entry name" value="Translation proteins"/>
    <property type="match status" value="1"/>
</dbReference>
<dbReference type="PROSITE" id="PS00474">
    <property type="entry name" value="RIBOSOMAL_L3"/>
    <property type="match status" value="1"/>
</dbReference>
<evidence type="ECO:0000255" key="1">
    <source>
        <dbReference type="HAMAP-Rule" id="MF_01325"/>
    </source>
</evidence>
<evidence type="ECO:0000305" key="2"/>
<organism>
    <name type="scientific">Pseudomonas entomophila (strain L48)</name>
    <dbReference type="NCBI Taxonomy" id="384676"/>
    <lineage>
        <taxon>Bacteria</taxon>
        <taxon>Pseudomonadati</taxon>
        <taxon>Pseudomonadota</taxon>
        <taxon>Gammaproteobacteria</taxon>
        <taxon>Pseudomonadales</taxon>
        <taxon>Pseudomonadaceae</taxon>
        <taxon>Pseudomonas</taxon>
    </lineage>
</organism>
<proteinExistence type="inferred from homology"/>
<feature type="chain" id="PRO_1000052114" description="Large ribosomal subunit protein uL3">
    <location>
        <begin position="1"/>
        <end position="211"/>
    </location>
</feature>
<feature type="modified residue" description="N5-methylglutamine" evidence="1">
    <location>
        <position position="150"/>
    </location>
</feature>
<protein>
    <recommendedName>
        <fullName evidence="1">Large ribosomal subunit protein uL3</fullName>
    </recommendedName>
    <alternativeName>
        <fullName evidence="2">50S ribosomal protein L3</fullName>
    </alternativeName>
</protein>
<reference key="1">
    <citation type="journal article" date="2006" name="Nat. Biotechnol.">
        <title>Complete genome sequence of the entomopathogenic and metabolically versatile soil bacterium Pseudomonas entomophila.</title>
        <authorList>
            <person name="Vodovar N."/>
            <person name="Vallenet D."/>
            <person name="Cruveiller S."/>
            <person name="Rouy Z."/>
            <person name="Barbe V."/>
            <person name="Acosta C."/>
            <person name="Cattolico L."/>
            <person name="Jubin C."/>
            <person name="Lajus A."/>
            <person name="Segurens B."/>
            <person name="Vacherie B."/>
            <person name="Wincker P."/>
            <person name="Weissenbach J."/>
            <person name="Lemaitre B."/>
            <person name="Medigue C."/>
            <person name="Boccard F."/>
        </authorList>
    </citation>
    <scope>NUCLEOTIDE SEQUENCE [LARGE SCALE GENOMIC DNA]</scope>
    <source>
        <strain>L48</strain>
    </source>
</reference>
<comment type="function">
    <text evidence="1">One of the primary rRNA binding proteins, it binds directly near the 3'-end of the 23S rRNA, where it nucleates assembly of the 50S subunit.</text>
</comment>
<comment type="subunit">
    <text evidence="1">Part of the 50S ribosomal subunit. Forms a cluster with proteins L14 and L19.</text>
</comment>
<comment type="PTM">
    <text evidence="1">Methylated by PrmB.</text>
</comment>
<comment type="similarity">
    <text evidence="1">Belongs to the universal ribosomal protein uL3 family.</text>
</comment>
<name>RL3_PSEE4</name>
<keyword id="KW-0488">Methylation</keyword>
<keyword id="KW-0687">Ribonucleoprotein</keyword>
<keyword id="KW-0689">Ribosomal protein</keyword>
<keyword id="KW-0694">RNA-binding</keyword>
<keyword id="KW-0699">rRNA-binding</keyword>
<gene>
    <name evidence="1" type="primary">rplC</name>
    <name type="ordered locus">PSEEN0490</name>
</gene>